<comment type="function">
    <text evidence="1">Forms part of the ribosomal stalk which helps the ribosome interact with GTP-bound translation factors. Is thus essential for accurate translation.</text>
</comment>
<comment type="subunit">
    <text evidence="1">Homodimer. Part of the ribosomal stalk of the 50S ribosomal subunit. Forms a multimeric L10(L12)X complex, where L10 forms an elongated spine to which 2 to 4 L12 dimers bind in a sequential fashion. Binds GTP-bound translation factors.</text>
</comment>
<comment type="similarity">
    <text evidence="1">Belongs to the bacterial ribosomal protein bL12 family.</text>
</comment>
<sequence length="128" mass="13366">MAVTKEEVVEFISNMTVLELSEFIKELEEKFGVSAAAPAAAMMVAAPAAGGAADAAEEKTEFDVILKEAGANKIGVIKVVRALTSLGLKEAKEKVDGCPSTLKEAVSKEEAEDAKKQLTEAGAVVEVK</sequence>
<feature type="chain" id="PRO_1000195790" description="Large ribosomal subunit protein bL12">
    <location>
        <begin position="1"/>
        <end position="128"/>
    </location>
</feature>
<keyword id="KW-0687">Ribonucleoprotein</keyword>
<keyword id="KW-0689">Ribosomal protein</keyword>
<name>RL7_DESDA</name>
<accession>B8J1A7</accession>
<organism>
    <name type="scientific">Desulfovibrio desulfuricans (strain ATCC 27774 / DSM 6949 / MB)</name>
    <dbReference type="NCBI Taxonomy" id="525146"/>
    <lineage>
        <taxon>Bacteria</taxon>
        <taxon>Pseudomonadati</taxon>
        <taxon>Thermodesulfobacteriota</taxon>
        <taxon>Desulfovibrionia</taxon>
        <taxon>Desulfovibrionales</taxon>
        <taxon>Desulfovibrionaceae</taxon>
        <taxon>Desulfovibrio</taxon>
    </lineage>
</organism>
<reference key="1">
    <citation type="submission" date="2009-01" db="EMBL/GenBank/DDBJ databases">
        <title>Complete sequence of Desulfovibrio desulfuricans subsp. desulfuricans str. ATCC 27774.</title>
        <authorList>
            <consortium name="US DOE Joint Genome Institute"/>
            <person name="Lucas S."/>
            <person name="Copeland A."/>
            <person name="Lapidus A."/>
            <person name="Glavina del Rio T."/>
            <person name="Tice H."/>
            <person name="Bruce D."/>
            <person name="Goodwin L."/>
            <person name="Pitluck S."/>
            <person name="Sims D."/>
            <person name="Lu M."/>
            <person name="Kiss H."/>
            <person name="Meineke L."/>
            <person name="Brettin T."/>
            <person name="Detter J.C."/>
            <person name="Han C."/>
            <person name="Larimer F."/>
            <person name="Land M."/>
            <person name="Hauser L."/>
            <person name="Kyrpides N."/>
            <person name="Ovchinnikova G."/>
            <person name="Hazen T.C."/>
        </authorList>
    </citation>
    <scope>NUCLEOTIDE SEQUENCE [LARGE SCALE GENOMIC DNA]</scope>
    <source>
        <strain>ATCC 27774 / DSM 6949 / MB</strain>
    </source>
</reference>
<dbReference type="EMBL" id="CP001358">
    <property type="protein sequence ID" value="ACL49534.1"/>
    <property type="molecule type" value="Genomic_DNA"/>
</dbReference>
<dbReference type="SMR" id="B8J1A7"/>
<dbReference type="STRING" id="525146.Ddes_1635"/>
<dbReference type="KEGG" id="dds:Ddes_1635"/>
<dbReference type="eggNOG" id="COG0222">
    <property type="taxonomic scope" value="Bacteria"/>
</dbReference>
<dbReference type="HOGENOM" id="CLU_086499_3_0_7"/>
<dbReference type="GO" id="GO:0022625">
    <property type="term" value="C:cytosolic large ribosomal subunit"/>
    <property type="evidence" value="ECO:0007669"/>
    <property type="project" value="TreeGrafter"/>
</dbReference>
<dbReference type="GO" id="GO:0003729">
    <property type="term" value="F:mRNA binding"/>
    <property type="evidence" value="ECO:0007669"/>
    <property type="project" value="TreeGrafter"/>
</dbReference>
<dbReference type="GO" id="GO:0003735">
    <property type="term" value="F:structural constituent of ribosome"/>
    <property type="evidence" value="ECO:0007669"/>
    <property type="project" value="InterPro"/>
</dbReference>
<dbReference type="GO" id="GO:0006412">
    <property type="term" value="P:translation"/>
    <property type="evidence" value="ECO:0007669"/>
    <property type="project" value="UniProtKB-UniRule"/>
</dbReference>
<dbReference type="CDD" id="cd00387">
    <property type="entry name" value="Ribosomal_L7_L12"/>
    <property type="match status" value="1"/>
</dbReference>
<dbReference type="FunFam" id="3.30.1390.10:FF:000001">
    <property type="entry name" value="50S ribosomal protein L7/L12"/>
    <property type="match status" value="1"/>
</dbReference>
<dbReference type="Gene3D" id="3.30.1390.10">
    <property type="match status" value="1"/>
</dbReference>
<dbReference type="Gene3D" id="1.20.5.710">
    <property type="entry name" value="Single helix bin"/>
    <property type="match status" value="1"/>
</dbReference>
<dbReference type="HAMAP" id="MF_00368">
    <property type="entry name" value="Ribosomal_bL12"/>
    <property type="match status" value="1"/>
</dbReference>
<dbReference type="InterPro" id="IPR000206">
    <property type="entry name" value="Ribosomal_bL12"/>
</dbReference>
<dbReference type="InterPro" id="IPR013823">
    <property type="entry name" value="Ribosomal_bL12_C"/>
</dbReference>
<dbReference type="InterPro" id="IPR014719">
    <property type="entry name" value="Ribosomal_bL12_C/ClpS-like"/>
</dbReference>
<dbReference type="InterPro" id="IPR008932">
    <property type="entry name" value="Ribosomal_bL12_oligo"/>
</dbReference>
<dbReference type="InterPro" id="IPR036235">
    <property type="entry name" value="Ribosomal_bL12_oligo_N_sf"/>
</dbReference>
<dbReference type="NCBIfam" id="TIGR00855">
    <property type="entry name" value="L12"/>
    <property type="match status" value="1"/>
</dbReference>
<dbReference type="PANTHER" id="PTHR45987">
    <property type="entry name" value="39S RIBOSOMAL PROTEIN L12"/>
    <property type="match status" value="1"/>
</dbReference>
<dbReference type="PANTHER" id="PTHR45987:SF4">
    <property type="entry name" value="LARGE RIBOSOMAL SUBUNIT PROTEIN BL12M"/>
    <property type="match status" value="1"/>
</dbReference>
<dbReference type="Pfam" id="PF00542">
    <property type="entry name" value="Ribosomal_L12"/>
    <property type="match status" value="1"/>
</dbReference>
<dbReference type="Pfam" id="PF16320">
    <property type="entry name" value="Ribosomal_L12_N"/>
    <property type="match status" value="1"/>
</dbReference>
<dbReference type="SUPFAM" id="SSF54736">
    <property type="entry name" value="ClpS-like"/>
    <property type="match status" value="1"/>
</dbReference>
<dbReference type="SUPFAM" id="SSF48300">
    <property type="entry name" value="Ribosomal protein L7/12, oligomerisation (N-terminal) domain"/>
    <property type="match status" value="1"/>
</dbReference>
<gene>
    <name evidence="1" type="primary">rplL</name>
    <name type="ordered locus">Ddes_1635</name>
</gene>
<protein>
    <recommendedName>
        <fullName evidence="1">Large ribosomal subunit protein bL12</fullName>
    </recommendedName>
    <alternativeName>
        <fullName evidence="2">50S ribosomal protein L7/L12</fullName>
    </alternativeName>
</protein>
<proteinExistence type="inferred from homology"/>
<evidence type="ECO:0000255" key="1">
    <source>
        <dbReference type="HAMAP-Rule" id="MF_00368"/>
    </source>
</evidence>
<evidence type="ECO:0000305" key="2"/>